<sequence>MAGEKFQKKGKEKWKEKVWYTVEAPPYLGSKEVSVALGEDSNSMVNRVVEVPISELTGNFKKSNEKALFRITNCEGTKCKTIFIGHYIGDDYIRRLVRRRKERIDIIEDVKTSDNSIITVKIVVVTDGKVTNTKKFQIRKVLTDFILNKGLSLPYSEFVRYLIGDDIYNDMISATKDIYPLKKIEVRKSELVSLSGISEIHAGSQNSGEEPVVQN</sequence>
<comment type="similarity">
    <text evidence="1">Belongs to the eukaryotic ribosomal protein eS1 family.</text>
</comment>
<protein>
    <recommendedName>
        <fullName evidence="1">Small ribosomal subunit protein eS1</fullName>
    </recommendedName>
    <alternativeName>
        <fullName evidence="2">30S ribosomal protein S3Ae</fullName>
    </alternativeName>
    <alternativeName>
        <fullName evidence="1">Ribosomal protein S1e</fullName>
    </alternativeName>
</protein>
<proteinExistence type="inferred from homology"/>
<organism>
    <name type="scientific">Thermoplasma volcanium (strain ATCC 51530 / DSM 4299 / JCM 9571 / NBRC 15438 / GSS1)</name>
    <dbReference type="NCBI Taxonomy" id="273116"/>
    <lineage>
        <taxon>Archaea</taxon>
        <taxon>Methanobacteriati</taxon>
        <taxon>Thermoplasmatota</taxon>
        <taxon>Thermoplasmata</taxon>
        <taxon>Thermoplasmatales</taxon>
        <taxon>Thermoplasmataceae</taxon>
        <taxon>Thermoplasma</taxon>
    </lineage>
</organism>
<dbReference type="EMBL" id="BA000011">
    <property type="protein sequence ID" value="BAB60412.1"/>
    <property type="molecule type" value="Genomic_DNA"/>
</dbReference>
<dbReference type="RefSeq" id="WP_010917505.1">
    <property type="nucleotide sequence ID" value="NC_002689.2"/>
</dbReference>
<dbReference type="SMR" id="Q978Z2"/>
<dbReference type="STRING" id="273116.gene:9382076"/>
<dbReference type="PaxDb" id="273116-14325509"/>
<dbReference type="GeneID" id="1441387"/>
<dbReference type="KEGG" id="tvo:TVG1311805"/>
<dbReference type="eggNOG" id="arCOG04186">
    <property type="taxonomic scope" value="Archaea"/>
</dbReference>
<dbReference type="HOGENOM" id="CLU_062507_1_0_2"/>
<dbReference type="OrthoDB" id="30639at2157"/>
<dbReference type="PhylomeDB" id="Q978Z2"/>
<dbReference type="Proteomes" id="UP000001017">
    <property type="component" value="Chromosome"/>
</dbReference>
<dbReference type="GO" id="GO:1990904">
    <property type="term" value="C:ribonucleoprotein complex"/>
    <property type="evidence" value="ECO:0007669"/>
    <property type="project" value="UniProtKB-KW"/>
</dbReference>
<dbReference type="GO" id="GO:0005840">
    <property type="term" value="C:ribosome"/>
    <property type="evidence" value="ECO:0007669"/>
    <property type="project" value="UniProtKB-KW"/>
</dbReference>
<dbReference type="GO" id="GO:0003735">
    <property type="term" value="F:structural constituent of ribosome"/>
    <property type="evidence" value="ECO:0007669"/>
    <property type="project" value="InterPro"/>
</dbReference>
<dbReference type="GO" id="GO:0006412">
    <property type="term" value="P:translation"/>
    <property type="evidence" value="ECO:0007669"/>
    <property type="project" value="UniProtKB-UniRule"/>
</dbReference>
<dbReference type="HAMAP" id="MF_00359">
    <property type="entry name" value="Ribosomal_eS1"/>
    <property type="match status" value="1"/>
</dbReference>
<dbReference type="InterPro" id="IPR001593">
    <property type="entry name" value="Ribosomal_eS1"/>
</dbReference>
<dbReference type="InterPro" id="IPR030838">
    <property type="entry name" value="Ribosomal_eS1_arc"/>
</dbReference>
<dbReference type="NCBIfam" id="NF003142">
    <property type="entry name" value="PRK04057.1"/>
    <property type="match status" value="1"/>
</dbReference>
<dbReference type="Pfam" id="PF01015">
    <property type="entry name" value="Ribosomal_S3Ae"/>
    <property type="match status" value="1"/>
</dbReference>
<dbReference type="SMART" id="SM01397">
    <property type="entry name" value="Ribosomal_S3Ae"/>
    <property type="match status" value="1"/>
</dbReference>
<feature type="chain" id="PRO_0000153564" description="Small ribosomal subunit protein eS1">
    <location>
        <begin position="1"/>
        <end position="215"/>
    </location>
</feature>
<reference key="1">
    <citation type="journal article" date="2000" name="Proc. Natl. Acad. Sci. U.S.A.">
        <title>Archaeal adaptation to higher temperatures revealed by genomic sequence of Thermoplasma volcanium.</title>
        <authorList>
            <person name="Kawashima T."/>
            <person name="Amano N."/>
            <person name="Koike H."/>
            <person name="Makino S."/>
            <person name="Higuchi S."/>
            <person name="Kawashima-Ohya Y."/>
            <person name="Watanabe K."/>
            <person name="Yamazaki M."/>
            <person name="Kanehori K."/>
            <person name="Kawamoto T."/>
            <person name="Nunoshiba T."/>
            <person name="Yamamoto Y."/>
            <person name="Aramaki H."/>
            <person name="Makino K."/>
            <person name="Suzuki M."/>
        </authorList>
    </citation>
    <scope>NUCLEOTIDE SEQUENCE [LARGE SCALE GENOMIC DNA]</scope>
    <source>
        <strain>ATCC 51530 / DSM 4299 / JCM 9571 / NBRC 15438 / GSS1</strain>
    </source>
</reference>
<gene>
    <name evidence="1" type="primary">rps3ae</name>
    <name type="ordered locus">TV1270</name>
    <name type="ORF">TVG1311805</name>
</gene>
<accession>Q978Z2</accession>
<evidence type="ECO:0000255" key="1">
    <source>
        <dbReference type="HAMAP-Rule" id="MF_00359"/>
    </source>
</evidence>
<evidence type="ECO:0000305" key="2"/>
<keyword id="KW-0687">Ribonucleoprotein</keyword>
<keyword id="KW-0689">Ribosomal protein</keyword>
<name>RS3A_THEVO</name>